<keyword id="KW-0030">Aminoacyl-tRNA synthetase</keyword>
<keyword id="KW-0067">ATP-binding</keyword>
<keyword id="KW-0963">Cytoplasm</keyword>
<keyword id="KW-0436">Ligase</keyword>
<keyword id="KW-0547">Nucleotide-binding</keyword>
<keyword id="KW-0648">Protein biosynthesis</keyword>
<keyword id="KW-1185">Reference proteome</keyword>
<name>SYS_SALRD</name>
<proteinExistence type="inferred from homology"/>
<reference key="1">
    <citation type="journal article" date="2005" name="Proc. Natl. Acad. Sci. U.S.A.">
        <title>The genome of Salinibacter ruber: convergence and gene exchange among hyperhalophilic bacteria and archaea.</title>
        <authorList>
            <person name="Mongodin E.F."/>
            <person name="Nelson K.E."/>
            <person name="Daugherty S."/>
            <person name="DeBoy R.T."/>
            <person name="Wister J."/>
            <person name="Khouri H."/>
            <person name="Weidman J."/>
            <person name="Walsh D.A."/>
            <person name="Papke R.T."/>
            <person name="Sanchez Perez G."/>
            <person name="Sharma A.K."/>
            <person name="Nesbo C.L."/>
            <person name="MacLeod D."/>
            <person name="Bapteste E."/>
            <person name="Doolittle W.F."/>
            <person name="Charlebois R.L."/>
            <person name="Legault B."/>
            <person name="Rodriguez-Valera F."/>
        </authorList>
    </citation>
    <scope>NUCLEOTIDE SEQUENCE [LARGE SCALE GENOMIC DNA]</scope>
    <source>
        <strain>DSM 13855 / CECT 5946 / M31</strain>
    </source>
</reference>
<feature type="chain" id="PRO_1000019807" description="Serine--tRNA ligase">
    <location>
        <begin position="1"/>
        <end position="428"/>
    </location>
</feature>
<feature type="binding site" evidence="1">
    <location>
        <begin position="233"/>
        <end position="235"/>
    </location>
    <ligand>
        <name>L-serine</name>
        <dbReference type="ChEBI" id="CHEBI:33384"/>
    </ligand>
</feature>
<feature type="binding site" evidence="1">
    <location>
        <begin position="264"/>
        <end position="266"/>
    </location>
    <ligand>
        <name>ATP</name>
        <dbReference type="ChEBI" id="CHEBI:30616"/>
    </ligand>
</feature>
<feature type="binding site" evidence="1">
    <location>
        <position position="287"/>
    </location>
    <ligand>
        <name>L-serine</name>
        <dbReference type="ChEBI" id="CHEBI:33384"/>
    </ligand>
</feature>
<feature type="binding site" evidence="1">
    <location>
        <begin position="351"/>
        <end position="354"/>
    </location>
    <ligand>
        <name>ATP</name>
        <dbReference type="ChEBI" id="CHEBI:30616"/>
    </ligand>
</feature>
<feature type="binding site" evidence="1">
    <location>
        <position position="387"/>
    </location>
    <ligand>
        <name>L-serine</name>
        <dbReference type="ChEBI" id="CHEBI:33384"/>
    </ligand>
</feature>
<organism>
    <name type="scientific">Salinibacter ruber (strain DSM 13855 / M31)</name>
    <dbReference type="NCBI Taxonomy" id="309807"/>
    <lineage>
        <taxon>Bacteria</taxon>
        <taxon>Pseudomonadati</taxon>
        <taxon>Rhodothermota</taxon>
        <taxon>Rhodothermia</taxon>
        <taxon>Rhodothermales</taxon>
        <taxon>Salinibacteraceae</taxon>
        <taxon>Salinibacter</taxon>
    </lineage>
</organism>
<dbReference type="EC" id="6.1.1.11" evidence="1"/>
<dbReference type="EMBL" id="CP000159">
    <property type="protein sequence ID" value="ABC44833.1"/>
    <property type="molecule type" value="Genomic_DNA"/>
</dbReference>
<dbReference type="RefSeq" id="WP_011404592.1">
    <property type="nucleotide sequence ID" value="NC_007677.1"/>
</dbReference>
<dbReference type="RefSeq" id="YP_445967.1">
    <property type="nucleotide sequence ID" value="NC_007677.1"/>
</dbReference>
<dbReference type="SMR" id="Q2S1G4"/>
<dbReference type="STRING" id="309807.SRU_1855"/>
<dbReference type="EnsemblBacteria" id="ABC44833">
    <property type="protein sequence ID" value="ABC44833"/>
    <property type="gene ID" value="SRU_1855"/>
</dbReference>
<dbReference type="KEGG" id="sru:SRU_1855"/>
<dbReference type="PATRIC" id="fig|309807.25.peg.1922"/>
<dbReference type="eggNOG" id="COG0172">
    <property type="taxonomic scope" value="Bacteria"/>
</dbReference>
<dbReference type="HOGENOM" id="CLU_023797_1_1_10"/>
<dbReference type="OrthoDB" id="9804647at2"/>
<dbReference type="UniPathway" id="UPA00906">
    <property type="reaction ID" value="UER00895"/>
</dbReference>
<dbReference type="Proteomes" id="UP000008674">
    <property type="component" value="Chromosome"/>
</dbReference>
<dbReference type="GO" id="GO:0005737">
    <property type="term" value="C:cytoplasm"/>
    <property type="evidence" value="ECO:0007669"/>
    <property type="project" value="UniProtKB-SubCell"/>
</dbReference>
<dbReference type="GO" id="GO:0005524">
    <property type="term" value="F:ATP binding"/>
    <property type="evidence" value="ECO:0007669"/>
    <property type="project" value="UniProtKB-UniRule"/>
</dbReference>
<dbReference type="GO" id="GO:0004828">
    <property type="term" value="F:serine-tRNA ligase activity"/>
    <property type="evidence" value="ECO:0007669"/>
    <property type="project" value="UniProtKB-UniRule"/>
</dbReference>
<dbReference type="GO" id="GO:0016260">
    <property type="term" value="P:selenocysteine biosynthetic process"/>
    <property type="evidence" value="ECO:0007669"/>
    <property type="project" value="UniProtKB-UniRule"/>
</dbReference>
<dbReference type="GO" id="GO:0006434">
    <property type="term" value="P:seryl-tRNA aminoacylation"/>
    <property type="evidence" value="ECO:0007669"/>
    <property type="project" value="UniProtKB-UniRule"/>
</dbReference>
<dbReference type="CDD" id="cd00770">
    <property type="entry name" value="SerRS_core"/>
    <property type="match status" value="1"/>
</dbReference>
<dbReference type="Gene3D" id="3.30.930.10">
    <property type="entry name" value="Bira Bifunctional Protein, Domain 2"/>
    <property type="match status" value="1"/>
</dbReference>
<dbReference type="Gene3D" id="1.10.287.40">
    <property type="entry name" value="Serine-tRNA synthetase, tRNA binding domain"/>
    <property type="match status" value="1"/>
</dbReference>
<dbReference type="HAMAP" id="MF_00176">
    <property type="entry name" value="Ser_tRNA_synth_type1"/>
    <property type="match status" value="1"/>
</dbReference>
<dbReference type="InterPro" id="IPR002314">
    <property type="entry name" value="aa-tRNA-synt_IIb"/>
</dbReference>
<dbReference type="InterPro" id="IPR006195">
    <property type="entry name" value="aa-tRNA-synth_II"/>
</dbReference>
<dbReference type="InterPro" id="IPR045864">
    <property type="entry name" value="aa-tRNA-synth_II/BPL/LPL"/>
</dbReference>
<dbReference type="InterPro" id="IPR002317">
    <property type="entry name" value="Ser-tRNA-ligase_type_1"/>
</dbReference>
<dbReference type="InterPro" id="IPR015866">
    <property type="entry name" value="Ser-tRNA-synth_1_N"/>
</dbReference>
<dbReference type="InterPro" id="IPR042103">
    <property type="entry name" value="SerRS_1_N_sf"/>
</dbReference>
<dbReference type="InterPro" id="IPR033729">
    <property type="entry name" value="SerRS_core"/>
</dbReference>
<dbReference type="InterPro" id="IPR010978">
    <property type="entry name" value="tRNA-bd_arm"/>
</dbReference>
<dbReference type="NCBIfam" id="TIGR00414">
    <property type="entry name" value="serS"/>
    <property type="match status" value="1"/>
</dbReference>
<dbReference type="PANTHER" id="PTHR43697:SF1">
    <property type="entry name" value="SERINE--TRNA LIGASE"/>
    <property type="match status" value="1"/>
</dbReference>
<dbReference type="PANTHER" id="PTHR43697">
    <property type="entry name" value="SERYL-TRNA SYNTHETASE"/>
    <property type="match status" value="1"/>
</dbReference>
<dbReference type="Pfam" id="PF02403">
    <property type="entry name" value="Seryl_tRNA_N"/>
    <property type="match status" value="1"/>
</dbReference>
<dbReference type="Pfam" id="PF00587">
    <property type="entry name" value="tRNA-synt_2b"/>
    <property type="match status" value="1"/>
</dbReference>
<dbReference type="PIRSF" id="PIRSF001529">
    <property type="entry name" value="Ser-tRNA-synth_IIa"/>
    <property type="match status" value="1"/>
</dbReference>
<dbReference type="PRINTS" id="PR00981">
    <property type="entry name" value="TRNASYNTHSER"/>
</dbReference>
<dbReference type="SUPFAM" id="SSF55681">
    <property type="entry name" value="Class II aaRS and biotin synthetases"/>
    <property type="match status" value="1"/>
</dbReference>
<dbReference type="SUPFAM" id="SSF46589">
    <property type="entry name" value="tRNA-binding arm"/>
    <property type="match status" value="1"/>
</dbReference>
<dbReference type="PROSITE" id="PS50862">
    <property type="entry name" value="AA_TRNA_LIGASE_II"/>
    <property type="match status" value="1"/>
</dbReference>
<sequence length="428" mass="48295">MLDLDTVRNDPRRVKEALRAKGIGSPDLVDTLLEIDETRRSAITELQDVQSRQNELSQQIGALKREGKDEEAEAIIEKTGRMKEKINRLKEEVQEAEARQEELVLELPNIPHPSVPVGADEDDNEVEATVGEMPAFDFDPAPHWELADRHNLVDLERGAKVAGSGFPFYLGKGARLQRALLNFFLDRARERGYTEMQAPLFVNPESAKGTGQIPDKDALMYEIPRDDFYPIPTAEVPVTNFHRDEILAADDLPRRYCTYSPCWRREAGSYGSDVRGLNRLHQFDKVELVRIVPPDESYRALDALLEDAESALDALDLPYRRLLMCTGDMGFTQAKVYDLEVWSAAQERWLEVSSVSNFEAFQARRAQIRYRLEPEAKPELVHTLNGSGLAFPRIVAALLENNQQPDGSIELPEALHPYTGFARIGAEA</sequence>
<evidence type="ECO:0000255" key="1">
    <source>
        <dbReference type="HAMAP-Rule" id="MF_00176"/>
    </source>
</evidence>
<gene>
    <name evidence="1" type="primary">serS</name>
    <name type="ordered locus">SRU_1855</name>
</gene>
<accession>Q2S1G4</accession>
<protein>
    <recommendedName>
        <fullName evidence="1">Serine--tRNA ligase</fullName>
        <ecNumber evidence="1">6.1.1.11</ecNumber>
    </recommendedName>
    <alternativeName>
        <fullName evidence="1">Seryl-tRNA synthetase</fullName>
        <shortName evidence="1">SerRS</shortName>
    </alternativeName>
    <alternativeName>
        <fullName evidence="1">Seryl-tRNA(Ser/Sec) synthetase</fullName>
    </alternativeName>
</protein>
<comment type="function">
    <text evidence="1">Catalyzes the attachment of serine to tRNA(Ser). Is also able to aminoacylate tRNA(Sec) with serine, to form the misacylated tRNA L-seryl-tRNA(Sec), which will be further converted into selenocysteinyl-tRNA(Sec).</text>
</comment>
<comment type="catalytic activity">
    <reaction evidence="1">
        <text>tRNA(Ser) + L-serine + ATP = L-seryl-tRNA(Ser) + AMP + diphosphate + H(+)</text>
        <dbReference type="Rhea" id="RHEA:12292"/>
        <dbReference type="Rhea" id="RHEA-COMP:9669"/>
        <dbReference type="Rhea" id="RHEA-COMP:9703"/>
        <dbReference type="ChEBI" id="CHEBI:15378"/>
        <dbReference type="ChEBI" id="CHEBI:30616"/>
        <dbReference type="ChEBI" id="CHEBI:33019"/>
        <dbReference type="ChEBI" id="CHEBI:33384"/>
        <dbReference type="ChEBI" id="CHEBI:78442"/>
        <dbReference type="ChEBI" id="CHEBI:78533"/>
        <dbReference type="ChEBI" id="CHEBI:456215"/>
        <dbReference type="EC" id="6.1.1.11"/>
    </reaction>
</comment>
<comment type="catalytic activity">
    <reaction evidence="1">
        <text>tRNA(Sec) + L-serine + ATP = L-seryl-tRNA(Sec) + AMP + diphosphate + H(+)</text>
        <dbReference type="Rhea" id="RHEA:42580"/>
        <dbReference type="Rhea" id="RHEA-COMP:9742"/>
        <dbReference type="Rhea" id="RHEA-COMP:10128"/>
        <dbReference type="ChEBI" id="CHEBI:15378"/>
        <dbReference type="ChEBI" id="CHEBI:30616"/>
        <dbReference type="ChEBI" id="CHEBI:33019"/>
        <dbReference type="ChEBI" id="CHEBI:33384"/>
        <dbReference type="ChEBI" id="CHEBI:78442"/>
        <dbReference type="ChEBI" id="CHEBI:78533"/>
        <dbReference type="ChEBI" id="CHEBI:456215"/>
        <dbReference type="EC" id="6.1.1.11"/>
    </reaction>
</comment>
<comment type="pathway">
    <text evidence="1">Aminoacyl-tRNA biosynthesis; selenocysteinyl-tRNA(Sec) biosynthesis; L-seryl-tRNA(Sec) from L-serine and tRNA(Sec): step 1/1.</text>
</comment>
<comment type="subunit">
    <text evidence="1">Homodimer. The tRNA molecule binds across the dimer.</text>
</comment>
<comment type="subcellular location">
    <subcellularLocation>
        <location evidence="1">Cytoplasm</location>
    </subcellularLocation>
</comment>
<comment type="domain">
    <text evidence="1">Consists of two distinct domains, a catalytic core and a N-terminal extension that is involved in tRNA binding.</text>
</comment>
<comment type="similarity">
    <text evidence="1">Belongs to the class-II aminoacyl-tRNA synthetase family. Type-1 seryl-tRNA synthetase subfamily.</text>
</comment>